<comment type="function">
    <text evidence="1">Catalyzes the reversible cyclization of carbamoyl aspartate to dihydroorotate.</text>
</comment>
<comment type="catalytic activity">
    <reaction evidence="1">
        <text>(S)-dihydroorotate + H2O = N-carbamoyl-L-aspartate + H(+)</text>
        <dbReference type="Rhea" id="RHEA:24296"/>
        <dbReference type="ChEBI" id="CHEBI:15377"/>
        <dbReference type="ChEBI" id="CHEBI:15378"/>
        <dbReference type="ChEBI" id="CHEBI:30864"/>
        <dbReference type="ChEBI" id="CHEBI:32814"/>
        <dbReference type="EC" id="3.5.2.3"/>
    </reaction>
</comment>
<comment type="cofactor">
    <cofactor evidence="1">
        <name>Zn(2+)</name>
        <dbReference type="ChEBI" id="CHEBI:29105"/>
    </cofactor>
    <text evidence="1">Binds 2 Zn(2+) ions per subunit.</text>
</comment>
<comment type="pathway">
    <text evidence="1">Pyrimidine metabolism; UMP biosynthesis via de novo pathway; (S)-dihydroorotate from bicarbonate: step 3/3.</text>
</comment>
<comment type="similarity">
    <text evidence="1">Belongs to the metallo-dependent hydrolases superfamily. DHOase family. Class I DHOase subfamily.</text>
</comment>
<organism>
    <name type="scientific">Geobacter sulfurreducens (strain ATCC 51573 / DSM 12127 / PCA)</name>
    <dbReference type="NCBI Taxonomy" id="243231"/>
    <lineage>
        <taxon>Bacteria</taxon>
        <taxon>Pseudomonadati</taxon>
        <taxon>Thermodesulfobacteriota</taxon>
        <taxon>Desulfuromonadia</taxon>
        <taxon>Geobacterales</taxon>
        <taxon>Geobacteraceae</taxon>
        <taxon>Geobacter</taxon>
    </lineage>
</organism>
<sequence>MNLLIKGGRVIDPSQGIDEVLDILVENGAIKELGKGLAAPAGAGVVDAAGLIVTPGLIDMHVHLRDPGLEYKEDIVTGTRAAAAGGFTSVACMPNTKPVNDNKAVTSYIVAKAKAEGLVNVFPVGSITQGSKGDALAEMGDLKEAGCVAVSDDGRPVTSSELMRRALEYAKGMGIMVISHAEDLSLVGEGVMNEGFVSTELGLKGIPWAAEDAATARDVYLAEFTNSPLHIAHVSTMGSLRIIRNAKARGVKVTCETAPHYFSLTDDAVRGYNTNAKMNPPLRTADDLAAVKEALKDGTIDAIATDHAPHHLDEKDVEFNVALNGIIGLETSLPLSLKLVEEGVLTLPALVEKMACNPAAILGIDRGTLRQGAVADITVIDPAAVWTVEAGALASKSKNSPFLGWEMKGAAAYTIVGGTVVHSRG</sequence>
<reference key="1">
    <citation type="journal article" date="2003" name="Science">
        <title>Genome of Geobacter sulfurreducens: metal reduction in subsurface environments.</title>
        <authorList>
            <person name="Methe B.A."/>
            <person name="Nelson K.E."/>
            <person name="Eisen J.A."/>
            <person name="Paulsen I.T."/>
            <person name="Nelson W.C."/>
            <person name="Heidelberg J.F."/>
            <person name="Wu D."/>
            <person name="Wu M."/>
            <person name="Ward N.L."/>
            <person name="Beanan M.J."/>
            <person name="Dodson R.J."/>
            <person name="Madupu R."/>
            <person name="Brinkac L.M."/>
            <person name="Daugherty S.C."/>
            <person name="DeBoy R.T."/>
            <person name="Durkin A.S."/>
            <person name="Gwinn M.L."/>
            <person name="Kolonay J.F."/>
            <person name="Sullivan S.A."/>
            <person name="Haft D.H."/>
            <person name="Selengut J."/>
            <person name="Davidsen T.M."/>
            <person name="Zafar N."/>
            <person name="White O."/>
            <person name="Tran B."/>
            <person name="Romero C."/>
            <person name="Forberger H.A."/>
            <person name="Weidman J.F."/>
            <person name="Khouri H.M."/>
            <person name="Feldblyum T.V."/>
            <person name="Utterback T.R."/>
            <person name="Van Aken S.E."/>
            <person name="Lovley D.R."/>
            <person name="Fraser C.M."/>
        </authorList>
    </citation>
    <scope>NUCLEOTIDE SEQUENCE [LARGE SCALE GENOMIC DNA]</scope>
    <source>
        <strain>ATCC 51573 / DSM 12127 / PCA</strain>
    </source>
</reference>
<accession>Q74DP4</accession>
<name>PYRC_GEOSL</name>
<dbReference type="EC" id="3.5.2.3" evidence="1"/>
<dbReference type="EMBL" id="AE017180">
    <property type="protein sequence ID" value="AAR34648.1"/>
    <property type="molecule type" value="Genomic_DNA"/>
</dbReference>
<dbReference type="RefSeq" id="NP_952325.1">
    <property type="nucleotide sequence ID" value="NC_002939.5"/>
</dbReference>
<dbReference type="RefSeq" id="WP_010941927.1">
    <property type="nucleotide sequence ID" value="NC_002939.5"/>
</dbReference>
<dbReference type="SMR" id="Q74DP4"/>
<dbReference type="FunCoup" id="Q74DP4">
    <property type="interactions" value="494"/>
</dbReference>
<dbReference type="STRING" id="243231.GSU1272"/>
<dbReference type="EnsemblBacteria" id="AAR34648">
    <property type="protein sequence ID" value="AAR34648"/>
    <property type="gene ID" value="GSU1272"/>
</dbReference>
<dbReference type="KEGG" id="gsu:GSU1272"/>
<dbReference type="PATRIC" id="fig|243231.5.peg.1267"/>
<dbReference type="eggNOG" id="COG0044">
    <property type="taxonomic scope" value="Bacteria"/>
</dbReference>
<dbReference type="HOGENOM" id="CLU_015572_1_0_7"/>
<dbReference type="InParanoid" id="Q74DP4"/>
<dbReference type="OrthoDB" id="9803027at2"/>
<dbReference type="UniPathway" id="UPA00070">
    <property type="reaction ID" value="UER00117"/>
</dbReference>
<dbReference type="Proteomes" id="UP000000577">
    <property type="component" value="Chromosome"/>
</dbReference>
<dbReference type="GO" id="GO:0005737">
    <property type="term" value="C:cytoplasm"/>
    <property type="evidence" value="ECO:0000318"/>
    <property type="project" value="GO_Central"/>
</dbReference>
<dbReference type="GO" id="GO:0004038">
    <property type="term" value="F:allantoinase activity"/>
    <property type="evidence" value="ECO:0000318"/>
    <property type="project" value="GO_Central"/>
</dbReference>
<dbReference type="GO" id="GO:0004151">
    <property type="term" value="F:dihydroorotase activity"/>
    <property type="evidence" value="ECO:0007669"/>
    <property type="project" value="UniProtKB-UniRule"/>
</dbReference>
<dbReference type="GO" id="GO:0008270">
    <property type="term" value="F:zinc ion binding"/>
    <property type="evidence" value="ECO:0007669"/>
    <property type="project" value="UniProtKB-UniRule"/>
</dbReference>
<dbReference type="GO" id="GO:0044205">
    <property type="term" value="P:'de novo' UMP biosynthetic process"/>
    <property type="evidence" value="ECO:0007669"/>
    <property type="project" value="UniProtKB-UniRule"/>
</dbReference>
<dbReference type="GO" id="GO:0006145">
    <property type="term" value="P:purine nucleobase catabolic process"/>
    <property type="evidence" value="ECO:0000318"/>
    <property type="project" value="GO_Central"/>
</dbReference>
<dbReference type="CDD" id="cd01317">
    <property type="entry name" value="DHOase_IIa"/>
    <property type="match status" value="1"/>
</dbReference>
<dbReference type="FunFam" id="3.20.20.140:FF:000201">
    <property type="entry name" value="Dihydroorotase"/>
    <property type="match status" value="1"/>
</dbReference>
<dbReference type="Gene3D" id="3.20.20.140">
    <property type="entry name" value="Metal-dependent hydrolases"/>
    <property type="match status" value="1"/>
</dbReference>
<dbReference type="Gene3D" id="2.30.40.10">
    <property type="entry name" value="Urease, subunit C, domain 1"/>
    <property type="match status" value="1"/>
</dbReference>
<dbReference type="HAMAP" id="MF_00220_B">
    <property type="entry name" value="PyrC_classI_B"/>
    <property type="match status" value="1"/>
</dbReference>
<dbReference type="InterPro" id="IPR006680">
    <property type="entry name" value="Amidohydro-rel"/>
</dbReference>
<dbReference type="InterPro" id="IPR004722">
    <property type="entry name" value="DHOase"/>
</dbReference>
<dbReference type="InterPro" id="IPR050138">
    <property type="entry name" value="DHOase/Allantoinase_Hydrolase"/>
</dbReference>
<dbReference type="InterPro" id="IPR002195">
    <property type="entry name" value="Dihydroorotase_CS"/>
</dbReference>
<dbReference type="InterPro" id="IPR011059">
    <property type="entry name" value="Metal-dep_hydrolase_composite"/>
</dbReference>
<dbReference type="InterPro" id="IPR032466">
    <property type="entry name" value="Metal_Hydrolase"/>
</dbReference>
<dbReference type="NCBIfam" id="TIGR00857">
    <property type="entry name" value="pyrC_multi"/>
    <property type="match status" value="1"/>
</dbReference>
<dbReference type="PANTHER" id="PTHR43668">
    <property type="entry name" value="ALLANTOINASE"/>
    <property type="match status" value="1"/>
</dbReference>
<dbReference type="PANTHER" id="PTHR43668:SF2">
    <property type="entry name" value="ALLANTOINASE"/>
    <property type="match status" value="1"/>
</dbReference>
<dbReference type="Pfam" id="PF01979">
    <property type="entry name" value="Amidohydro_1"/>
    <property type="match status" value="1"/>
</dbReference>
<dbReference type="SUPFAM" id="SSF51338">
    <property type="entry name" value="Composite domain of metallo-dependent hydrolases"/>
    <property type="match status" value="1"/>
</dbReference>
<dbReference type="SUPFAM" id="SSF51556">
    <property type="entry name" value="Metallo-dependent hydrolases"/>
    <property type="match status" value="1"/>
</dbReference>
<dbReference type="PROSITE" id="PS00482">
    <property type="entry name" value="DIHYDROOROTASE_1"/>
    <property type="match status" value="1"/>
</dbReference>
<dbReference type="PROSITE" id="PS00483">
    <property type="entry name" value="DIHYDROOROTASE_2"/>
    <property type="match status" value="1"/>
</dbReference>
<evidence type="ECO:0000255" key="1">
    <source>
        <dbReference type="HAMAP-Rule" id="MF_00220"/>
    </source>
</evidence>
<proteinExistence type="inferred from homology"/>
<protein>
    <recommendedName>
        <fullName evidence="1">Dihydroorotase</fullName>
        <shortName evidence="1">DHOase</shortName>
        <ecNumber evidence="1">3.5.2.3</ecNumber>
    </recommendedName>
</protein>
<feature type="chain" id="PRO_1000024084" description="Dihydroorotase">
    <location>
        <begin position="1"/>
        <end position="425"/>
    </location>
</feature>
<feature type="active site" evidence="1">
    <location>
        <position position="306"/>
    </location>
</feature>
<feature type="binding site" evidence="1">
    <location>
        <position position="61"/>
    </location>
    <ligand>
        <name>Zn(2+)</name>
        <dbReference type="ChEBI" id="CHEBI:29105"/>
        <label>1</label>
    </ligand>
</feature>
<feature type="binding site" evidence="1">
    <location>
        <begin position="63"/>
        <end position="65"/>
    </location>
    <ligand>
        <name>substrate</name>
    </ligand>
</feature>
<feature type="binding site" evidence="1">
    <location>
        <position position="63"/>
    </location>
    <ligand>
        <name>Zn(2+)</name>
        <dbReference type="ChEBI" id="CHEBI:29105"/>
        <label>1</label>
    </ligand>
</feature>
<feature type="binding site" evidence="1">
    <location>
        <position position="95"/>
    </location>
    <ligand>
        <name>substrate</name>
    </ligand>
</feature>
<feature type="binding site" evidence="1">
    <location>
        <position position="153"/>
    </location>
    <ligand>
        <name>Zn(2+)</name>
        <dbReference type="ChEBI" id="CHEBI:29105"/>
        <label>1</label>
    </ligand>
</feature>
<feature type="binding site" evidence="1">
    <location>
        <position position="153"/>
    </location>
    <ligand>
        <name>Zn(2+)</name>
        <dbReference type="ChEBI" id="CHEBI:29105"/>
        <label>2</label>
    </ligand>
</feature>
<feature type="binding site" evidence="1">
    <location>
        <position position="180"/>
    </location>
    <ligand>
        <name>Zn(2+)</name>
        <dbReference type="ChEBI" id="CHEBI:29105"/>
        <label>2</label>
    </ligand>
</feature>
<feature type="binding site" evidence="1">
    <location>
        <position position="233"/>
    </location>
    <ligand>
        <name>Zn(2+)</name>
        <dbReference type="ChEBI" id="CHEBI:29105"/>
        <label>2</label>
    </ligand>
</feature>
<feature type="binding site" evidence="1">
    <location>
        <position position="279"/>
    </location>
    <ligand>
        <name>substrate</name>
    </ligand>
</feature>
<feature type="binding site" evidence="1">
    <location>
        <position position="306"/>
    </location>
    <ligand>
        <name>Zn(2+)</name>
        <dbReference type="ChEBI" id="CHEBI:29105"/>
        <label>1</label>
    </ligand>
</feature>
<feature type="binding site" evidence="1">
    <location>
        <position position="310"/>
    </location>
    <ligand>
        <name>substrate</name>
    </ligand>
</feature>
<keyword id="KW-0378">Hydrolase</keyword>
<keyword id="KW-0479">Metal-binding</keyword>
<keyword id="KW-0665">Pyrimidine biosynthesis</keyword>
<keyword id="KW-1185">Reference proteome</keyword>
<keyword id="KW-0862">Zinc</keyword>
<gene>
    <name evidence="1" type="primary">pyrC</name>
    <name type="ordered locus">GSU1272</name>
</gene>